<organism>
    <name type="scientific">Rippkaea orientalis (strain PCC 8801 / RF-1)</name>
    <name type="common">Cyanothece sp. (strain PCC 8801)</name>
    <dbReference type="NCBI Taxonomy" id="41431"/>
    <lineage>
        <taxon>Bacteria</taxon>
        <taxon>Bacillati</taxon>
        <taxon>Cyanobacteriota</taxon>
        <taxon>Cyanophyceae</taxon>
        <taxon>Oscillatoriophycideae</taxon>
        <taxon>Chroococcales</taxon>
        <taxon>Aphanothecaceae</taxon>
        <taxon>Rippkaea</taxon>
        <taxon>Rippkaea orientalis</taxon>
    </lineage>
</organism>
<dbReference type="EC" id="5.3.1.16" evidence="1"/>
<dbReference type="EMBL" id="CP001287">
    <property type="protein sequence ID" value="ACK64429.1"/>
    <property type="molecule type" value="Genomic_DNA"/>
</dbReference>
<dbReference type="RefSeq" id="WP_012593706.1">
    <property type="nucleotide sequence ID" value="NC_011726.1"/>
</dbReference>
<dbReference type="SMR" id="B7K3A9"/>
<dbReference type="STRING" id="41431.PCC8801_0331"/>
<dbReference type="KEGG" id="cyp:PCC8801_0331"/>
<dbReference type="eggNOG" id="COG0106">
    <property type="taxonomic scope" value="Bacteria"/>
</dbReference>
<dbReference type="HOGENOM" id="CLU_048577_1_1_3"/>
<dbReference type="OrthoDB" id="9807749at2"/>
<dbReference type="UniPathway" id="UPA00031">
    <property type="reaction ID" value="UER00009"/>
</dbReference>
<dbReference type="Proteomes" id="UP000008204">
    <property type="component" value="Chromosome"/>
</dbReference>
<dbReference type="GO" id="GO:0005737">
    <property type="term" value="C:cytoplasm"/>
    <property type="evidence" value="ECO:0007669"/>
    <property type="project" value="UniProtKB-SubCell"/>
</dbReference>
<dbReference type="GO" id="GO:0003949">
    <property type="term" value="F:1-(5-phosphoribosyl)-5-[(5-phosphoribosylamino)methylideneamino]imidazole-4-carboxamide isomerase activity"/>
    <property type="evidence" value="ECO:0007669"/>
    <property type="project" value="UniProtKB-UniRule"/>
</dbReference>
<dbReference type="GO" id="GO:0000105">
    <property type="term" value="P:L-histidine biosynthetic process"/>
    <property type="evidence" value="ECO:0007669"/>
    <property type="project" value="UniProtKB-UniRule"/>
</dbReference>
<dbReference type="GO" id="GO:0000162">
    <property type="term" value="P:L-tryptophan biosynthetic process"/>
    <property type="evidence" value="ECO:0007669"/>
    <property type="project" value="TreeGrafter"/>
</dbReference>
<dbReference type="CDD" id="cd04732">
    <property type="entry name" value="HisA"/>
    <property type="match status" value="1"/>
</dbReference>
<dbReference type="FunFam" id="3.20.20.70:FF:000009">
    <property type="entry name" value="1-(5-phosphoribosyl)-5-[(5-phosphoribosylamino)methylideneamino] imidazole-4-carboxamide isomerase"/>
    <property type="match status" value="1"/>
</dbReference>
<dbReference type="Gene3D" id="3.20.20.70">
    <property type="entry name" value="Aldolase class I"/>
    <property type="match status" value="1"/>
</dbReference>
<dbReference type="HAMAP" id="MF_01014">
    <property type="entry name" value="HisA"/>
    <property type="match status" value="1"/>
</dbReference>
<dbReference type="InterPro" id="IPR013785">
    <property type="entry name" value="Aldolase_TIM"/>
</dbReference>
<dbReference type="InterPro" id="IPR006062">
    <property type="entry name" value="His_biosynth"/>
</dbReference>
<dbReference type="InterPro" id="IPR006063">
    <property type="entry name" value="HisA_bact_arch"/>
</dbReference>
<dbReference type="InterPro" id="IPR044524">
    <property type="entry name" value="Isoase_HisA-like"/>
</dbReference>
<dbReference type="InterPro" id="IPR023016">
    <property type="entry name" value="Isoase_HisA-like_bact"/>
</dbReference>
<dbReference type="InterPro" id="IPR011060">
    <property type="entry name" value="RibuloseP-bd_barrel"/>
</dbReference>
<dbReference type="NCBIfam" id="TIGR00007">
    <property type="entry name" value="1-(5-phosphoribosyl)-5-[(5-phosphoribosylamino)methylideneamino]imidazole-4-carboxamide isomerase"/>
    <property type="match status" value="1"/>
</dbReference>
<dbReference type="NCBIfam" id="NF010112">
    <property type="entry name" value="PRK13585.1"/>
    <property type="match status" value="1"/>
</dbReference>
<dbReference type="PANTHER" id="PTHR43090">
    <property type="entry name" value="1-(5-PHOSPHORIBOSYL)-5-[(5-PHOSPHORIBOSYLAMINO)METHYLIDENEAMINO] IMIDAZOLE-4-CARBOXAMIDE ISOMERASE"/>
    <property type="match status" value="1"/>
</dbReference>
<dbReference type="PANTHER" id="PTHR43090:SF2">
    <property type="entry name" value="1-(5-PHOSPHORIBOSYL)-5-[(5-PHOSPHORIBOSYLAMINO)METHYLIDENEAMINO] IMIDAZOLE-4-CARBOXAMIDE ISOMERASE"/>
    <property type="match status" value="1"/>
</dbReference>
<dbReference type="Pfam" id="PF00977">
    <property type="entry name" value="His_biosynth"/>
    <property type="match status" value="1"/>
</dbReference>
<dbReference type="SUPFAM" id="SSF51366">
    <property type="entry name" value="Ribulose-phoshate binding barrel"/>
    <property type="match status" value="1"/>
</dbReference>
<feature type="chain" id="PRO_1000135100" description="1-(5-phosphoribosyl)-5-[(5-phosphoribosylamino)methylideneamino] imidazole-4-carboxamide isomerase">
    <location>
        <begin position="1"/>
        <end position="257"/>
    </location>
</feature>
<feature type="active site" description="Proton acceptor" evidence="1">
    <location>
        <position position="8"/>
    </location>
</feature>
<feature type="active site" description="Proton donor" evidence="1">
    <location>
        <position position="129"/>
    </location>
</feature>
<name>HIS4_RIPO1</name>
<sequence length="257" mass="27332">MDVIPAIDLLDGRCVRLYQGDYQQSQVYNDNPVEVARQWADQGATYLHLVDLDGAKQGKPVNLASIEAIIRGISIPVQVGGGLRDRASIVQLFNLGVDRAIVGTVAVENPTLVKELCAEFPRKIAVGIDARNGKVATRGWLETSEVIATELAQEMAQLGAAAIIYTDIHRDGTLSGPNREALRELASNIEIPVIASGGISSLTDLLGLLSLEPLGVTGVIVGKALYTGDVDLSEALRAIGPGRWQDVPPDIDSSLFG</sequence>
<keyword id="KW-0028">Amino-acid biosynthesis</keyword>
<keyword id="KW-0963">Cytoplasm</keyword>
<keyword id="KW-0368">Histidine biosynthesis</keyword>
<keyword id="KW-0413">Isomerase</keyword>
<keyword id="KW-1185">Reference proteome</keyword>
<proteinExistence type="inferred from homology"/>
<comment type="catalytic activity">
    <reaction evidence="1">
        <text>1-(5-phospho-beta-D-ribosyl)-5-[(5-phospho-beta-D-ribosylamino)methylideneamino]imidazole-4-carboxamide = 5-[(5-phospho-1-deoxy-D-ribulos-1-ylimino)methylamino]-1-(5-phospho-beta-D-ribosyl)imidazole-4-carboxamide</text>
        <dbReference type="Rhea" id="RHEA:15469"/>
        <dbReference type="ChEBI" id="CHEBI:58435"/>
        <dbReference type="ChEBI" id="CHEBI:58525"/>
        <dbReference type="EC" id="5.3.1.16"/>
    </reaction>
</comment>
<comment type="pathway">
    <text evidence="1">Amino-acid biosynthesis; L-histidine biosynthesis; L-histidine from 5-phospho-alpha-D-ribose 1-diphosphate: step 4/9.</text>
</comment>
<comment type="subcellular location">
    <subcellularLocation>
        <location evidence="1">Cytoplasm</location>
    </subcellularLocation>
</comment>
<comment type="similarity">
    <text evidence="1">Belongs to the HisA/HisF family.</text>
</comment>
<evidence type="ECO:0000255" key="1">
    <source>
        <dbReference type="HAMAP-Rule" id="MF_01014"/>
    </source>
</evidence>
<accession>B7K3A9</accession>
<gene>
    <name evidence="1" type="primary">hisA</name>
    <name type="ordered locus">PCC8801_0331</name>
</gene>
<reference key="1">
    <citation type="journal article" date="2011" name="MBio">
        <title>Novel metabolic attributes of the genus Cyanothece, comprising a group of unicellular nitrogen-fixing Cyanobacteria.</title>
        <authorList>
            <person name="Bandyopadhyay A."/>
            <person name="Elvitigala T."/>
            <person name="Welsh E."/>
            <person name="Stockel J."/>
            <person name="Liberton M."/>
            <person name="Min H."/>
            <person name="Sherman L.A."/>
            <person name="Pakrasi H.B."/>
        </authorList>
    </citation>
    <scope>NUCLEOTIDE SEQUENCE [LARGE SCALE GENOMIC DNA]</scope>
    <source>
        <strain>PCC 8801 / RF-1</strain>
    </source>
</reference>
<protein>
    <recommendedName>
        <fullName evidence="1">1-(5-phosphoribosyl)-5-[(5-phosphoribosylamino)methylideneamino] imidazole-4-carboxamide isomerase</fullName>
        <ecNumber evidence="1">5.3.1.16</ecNumber>
    </recommendedName>
    <alternativeName>
        <fullName evidence="1">Phosphoribosylformimino-5-aminoimidazole carboxamide ribotide isomerase</fullName>
    </alternativeName>
</protein>